<feature type="chain" id="PRO_0000430159" description="Protein BREAST CANCER SUSCEPTIBILITY 2 homolog A">
    <location>
        <begin position="1"/>
        <end position="1151"/>
    </location>
</feature>
<feature type="repeat" description="BRCA2 1" evidence="1">
    <location>
        <begin position="63"/>
        <end position="97"/>
    </location>
</feature>
<feature type="repeat" description="BRCA2 2" evidence="1">
    <location>
        <begin position="116"/>
        <end position="150"/>
    </location>
</feature>
<feature type="repeat" description="BRCA2 3" evidence="1">
    <location>
        <begin position="163"/>
        <end position="197"/>
    </location>
</feature>
<feature type="repeat" description="BRCA2 4" evidence="1">
    <location>
        <begin position="257"/>
        <end position="291"/>
    </location>
</feature>
<feature type="region of interest" description="Disordered" evidence="2">
    <location>
        <begin position="408"/>
        <end position="427"/>
    </location>
</feature>
<gene>
    <name evidence="8" type="primary">BRCA2A</name>
    <name evidence="7" type="synonym">BRCA5(IV)</name>
    <name evidence="10" type="ordered locus">At4g00020/At4g00010</name>
    <name evidence="11 12" type="ORF">F6N15.14/F6N15.15</name>
</gene>
<evidence type="ECO:0000255" key="1">
    <source>
        <dbReference type="PROSITE-ProRule" id="PRU00032"/>
    </source>
</evidence>
<evidence type="ECO:0000256" key="2">
    <source>
        <dbReference type="SAM" id="MobiDB-lite"/>
    </source>
</evidence>
<evidence type="ECO:0000269" key="3">
    <source>
    </source>
</evidence>
<evidence type="ECO:0000269" key="4">
    <source>
    </source>
</evidence>
<evidence type="ECO:0000269" key="5">
    <source>
    </source>
</evidence>
<evidence type="ECO:0000269" key="6">
    <source>
    </source>
</evidence>
<evidence type="ECO:0000303" key="7">
    <source>
    </source>
</evidence>
<evidence type="ECO:0000303" key="8">
    <source>
    </source>
</evidence>
<evidence type="ECO:0000305" key="9"/>
<evidence type="ECO:0000312" key="10">
    <source>
        <dbReference type="Araport" id="AT4G00020"/>
    </source>
</evidence>
<evidence type="ECO:0000312" key="11">
    <source>
        <dbReference type="EMBL" id="CAB80759.1"/>
    </source>
</evidence>
<evidence type="ECO:0000312" key="12">
    <source>
        <dbReference type="EMBL" id="CAB80760.1"/>
    </source>
</evidence>
<dbReference type="EMBL" id="AF069299">
    <property type="protein sequence ID" value="AAC19315.1"/>
    <property type="status" value="ALT_SEQ"/>
    <property type="molecule type" value="Genomic_DNA"/>
</dbReference>
<dbReference type="EMBL" id="AL161471">
    <property type="protein sequence ID" value="CAB80759.1"/>
    <property type="status" value="ALT_SEQ"/>
    <property type="molecule type" value="Genomic_DNA"/>
</dbReference>
<dbReference type="EMBL" id="AL161471">
    <property type="protein sequence ID" value="CAB80760.1"/>
    <property type="status" value="ALT_SEQ"/>
    <property type="molecule type" value="Genomic_DNA"/>
</dbReference>
<dbReference type="EMBL" id="CP002687">
    <property type="protein sequence ID" value="AEE81813.1"/>
    <property type="molecule type" value="Genomic_DNA"/>
</dbReference>
<dbReference type="EMBL" id="AJ488304">
    <property type="protein sequence ID" value="CAD32571.1"/>
    <property type="molecule type" value="mRNA"/>
</dbReference>
<dbReference type="PIR" id="A85001">
    <property type="entry name" value="A85001"/>
</dbReference>
<dbReference type="PIR" id="T01330">
    <property type="entry name" value="T01330"/>
</dbReference>
<dbReference type="RefSeq" id="NP_191913.3">
    <molecule id="Q7Y1C5-1"/>
    <property type="nucleotide sequence ID" value="NM_116219.5"/>
</dbReference>
<dbReference type="SMR" id="Q7Y1C5"/>
<dbReference type="BioGRID" id="13519">
    <property type="interactions" value="5"/>
</dbReference>
<dbReference type="DIP" id="DIP-59496N"/>
<dbReference type="FunCoup" id="Q7Y1C5">
    <property type="interactions" value="195"/>
</dbReference>
<dbReference type="IntAct" id="Q7Y1C5">
    <property type="interactions" value="5"/>
</dbReference>
<dbReference type="STRING" id="3702.Q7Y1C5"/>
<dbReference type="iPTMnet" id="Q7Y1C5"/>
<dbReference type="PaxDb" id="3702-AT4G00020.2"/>
<dbReference type="ProteomicsDB" id="240412">
    <molecule id="Q7Y1C5-1"/>
</dbReference>
<dbReference type="EnsemblPlants" id="AT4G00020.1">
    <molecule id="Q7Y1C5-1"/>
    <property type="protein sequence ID" value="AT4G00020.1"/>
    <property type="gene ID" value="AT4G00020"/>
</dbReference>
<dbReference type="GeneID" id="828230"/>
<dbReference type="Gramene" id="AT4G00020.1">
    <molecule id="Q7Y1C5-1"/>
    <property type="protein sequence ID" value="AT4G00020.1"/>
    <property type="gene ID" value="AT4G00020"/>
</dbReference>
<dbReference type="KEGG" id="ath:AT4G00020"/>
<dbReference type="Araport" id="AT4G00020"/>
<dbReference type="TAIR" id="AT4G00020">
    <property type="gene designation" value="BRCA2(IV)"/>
</dbReference>
<dbReference type="eggNOG" id="KOG4751">
    <property type="taxonomic scope" value="Eukaryota"/>
</dbReference>
<dbReference type="HOGENOM" id="CLU_004336_0_0_1"/>
<dbReference type="InParanoid" id="Q7Y1C5"/>
<dbReference type="OMA" id="MMELYNQ"/>
<dbReference type="PhylomeDB" id="Q7Y1C5"/>
<dbReference type="PRO" id="PR:Q7Y1C5"/>
<dbReference type="Proteomes" id="UP000006548">
    <property type="component" value="Chromosome 4"/>
</dbReference>
<dbReference type="ExpressionAtlas" id="Q7Y1C5">
    <property type="expression patterns" value="baseline and differential"/>
</dbReference>
<dbReference type="GO" id="GO:0003677">
    <property type="term" value="F:DNA binding"/>
    <property type="evidence" value="ECO:0007669"/>
    <property type="project" value="UniProtKB-KW"/>
</dbReference>
<dbReference type="GO" id="GO:0000724">
    <property type="term" value="P:double-strand break repair via homologous recombination"/>
    <property type="evidence" value="ECO:0000316"/>
    <property type="project" value="UniProtKB"/>
</dbReference>
<dbReference type="GO" id="GO:0051321">
    <property type="term" value="P:meiotic cell cycle"/>
    <property type="evidence" value="ECO:0007669"/>
    <property type="project" value="UniProtKB-KW"/>
</dbReference>
<dbReference type="CDD" id="cd04493">
    <property type="entry name" value="BRCA2DBD_OB1"/>
    <property type="match status" value="1"/>
</dbReference>
<dbReference type="CDD" id="cd04494">
    <property type="entry name" value="BRCA2DBD_OB2"/>
    <property type="match status" value="1"/>
</dbReference>
<dbReference type="FunFam" id="2.40.50.140:FF:000262">
    <property type="entry name" value="Protein BREAST CANCER SUSCEPTIBILITY 2 homolog B"/>
    <property type="match status" value="1"/>
</dbReference>
<dbReference type="FunFam" id="2.40.50.140:FF:000267">
    <property type="entry name" value="Protein BREAST CANCER SUSCEPTIBILITY 2 homolog B"/>
    <property type="match status" value="1"/>
</dbReference>
<dbReference type="FunFam" id="2.40.50.140:FF:000282">
    <property type="entry name" value="Protein BREAST CANCER SUSCEPTIBILITY 2 homolog B"/>
    <property type="match status" value="1"/>
</dbReference>
<dbReference type="FunFam" id="2.40.50.140:FF:000297">
    <property type="entry name" value="Protein BREAST CANCER SUSCEPTIBILITY 2 homolog B"/>
    <property type="match status" value="1"/>
</dbReference>
<dbReference type="Gene3D" id="2.40.50.140">
    <property type="entry name" value="Nucleic acid-binding proteins"/>
    <property type="match status" value="4"/>
</dbReference>
<dbReference type="InterPro" id="IPR015525">
    <property type="entry name" value="BRCA2"/>
</dbReference>
<dbReference type="InterPro" id="IPR015252">
    <property type="entry name" value="BRCA2_hlx"/>
</dbReference>
<dbReference type="InterPro" id="IPR036315">
    <property type="entry name" value="BRCA2_hlx_sf"/>
</dbReference>
<dbReference type="InterPro" id="IPR015187">
    <property type="entry name" value="BRCA2_OB_1"/>
</dbReference>
<dbReference type="InterPro" id="IPR048262">
    <property type="entry name" value="BRCA2_OB_2_dom"/>
</dbReference>
<dbReference type="InterPro" id="IPR002093">
    <property type="entry name" value="BRCA2_repeat"/>
</dbReference>
<dbReference type="InterPro" id="IPR012340">
    <property type="entry name" value="NA-bd_OB-fold"/>
</dbReference>
<dbReference type="PANTHER" id="PTHR11289:SF0">
    <property type="entry name" value="BREAST CANCER TYPE 2 SUSCEPTIBILITY PROTEIN"/>
    <property type="match status" value="1"/>
</dbReference>
<dbReference type="PANTHER" id="PTHR11289">
    <property type="entry name" value="BREAST CANCER TYPE 2 SUSCEPTIBILITY PROTEIN BRCA2"/>
    <property type="match status" value="1"/>
</dbReference>
<dbReference type="Pfam" id="PF09169">
    <property type="entry name" value="BRCA-2_helical"/>
    <property type="match status" value="1"/>
</dbReference>
<dbReference type="Pfam" id="PF09103">
    <property type="entry name" value="BRCA-2_OB1"/>
    <property type="match status" value="1"/>
</dbReference>
<dbReference type="Pfam" id="PF00634">
    <property type="entry name" value="BRCA2"/>
    <property type="match status" value="4"/>
</dbReference>
<dbReference type="PIRSF" id="PIRSF002397">
    <property type="entry name" value="BRCA2"/>
    <property type="match status" value="1"/>
</dbReference>
<dbReference type="SUPFAM" id="SSF81872">
    <property type="entry name" value="BRCA2 helical domain"/>
    <property type="match status" value="1"/>
</dbReference>
<dbReference type="SUPFAM" id="SSF81878">
    <property type="entry name" value="BRCA2 tower domain"/>
    <property type="match status" value="1"/>
</dbReference>
<dbReference type="SUPFAM" id="SSF50249">
    <property type="entry name" value="Nucleic acid-binding proteins"/>
    <property type="match status" value="3"/>
</dbReference>
<dbReference type="PROSITE" id="PS50138">
    <property type="entry name" value="BRCA2_REPEAT"/>
    <property type="match status" value="2"/>
</dbReference>
<name>BRC2A_ARATH</name>
<sequence>MSTWQLFPDSSGDGFRWEVAGRILQSVSDSTPTKALESTAPLPSMADLLLQGCSKLIAREEAMPGEIPMFRTGLGKSVVLKESSIAKAKSILAEKVTYSDLRNTNCSIPQMRQVDTAETLPMFRTASGKSVPLKESSIAKAMSILGSDKIIDSDNVLPRESGFGVSNSLFQTASNKKVNVSSAGLARAKALLGLEEDDLNGFNHVNQSSSSSQQHGWSGLKTHEEFDATVVKHHSGTPGQYEDYVSGKRSEVLNPSLKVPPTKFQTAGGKSLSVSAEALKRARNLLGDPELGSFFDDVAGGDQFFTPEKDERLSDIAINNGSANRGYIAHEEKTSNKHTPNSFVSPLWSSSKQFSSVNLENLASGGNLIKKFDAAVDETDCALNATHGLSNNRSLASDMAVNNSKVNGFIPRGRQPGRPADQPLVDITNRRDTAYAYNKQDSTQKKRLGKTVSVSPFKRPRISSFKTPSKKHALQASSGLSVVSCDTLTSKKVLSTRYPEKSPRVYIKDFFGMHPTATTRMDYVPDHVRRIKSSNADKYVFCDESSSNKVGAETFLQMLAESGASLQHASRKWVTNHYRWIVWKLACYDIYYPAKCRGNFLTITNVLEELKYRYEREVNHGHCSAIKRILSGDAPASSMMVLCISAINPKTDNDSQEAHCSDSCSNVKVELTDGWYSMNAALDVVLTKQLNAGKLFVGQKLRILGAGLSGWATPTSPLEAVISSTICLLLNINGTYRAHWADRLGFCKEIGVPLALNCIKCNGGPVPKTLAGIKRIYPILYKERLGEKKSIVRSERIESRIIQLHNQRRSALVEGIMCEYQRGINGVHSQNDTDSEEGAKIFKLLETAAEPEFLMAEMSPEQLRSFTTYKAKFEAAQQMRKEKSVAETLEDAGLGERNVTPFMRIRLVGLTSLSYEGEHNPKEGIVTIWDPTERQRTELTEGKIYMMKGLVPINSDSEILYLHARGSSSRWQPLSPKDSENFQPFFNPRKPISLSNLGEIPLSSEFDIAAYVVYVGNAYTDVLQKKQWVFVTDGSAQHSGEISNSLLAISFSTSFMDDSSVSHISHNLVGSVVGFCNLIKRAKDVTNEIWVAEAAENSVYFINAEAAYSSHLKTSSAHIQTWAKLSSSKSVIHELRQRVLSIIGACKSPSC</sequence>
<comment type="function">
    <text evidence="3 5 6">Involved in double-strand break repair and/or homologous recombination by mediating RAD51- and DMC1-facilitated DNA repair. Plays an essential role in both somatic and meiotic homologous recombination. Is crucial for the formation of RAD51 and DMC1 foci during male meiotic homologous recombination in prophase I.</text>
</comment>
<comment type="subunit">
    <text evidence="3 4">Interacts with RAD51 and DMC1 (PubMed:15014444, PubMed:16415210). Interacts with DSS1(I) (PubMed:16415210).</text>
</comment>
<comment type="interaction">
    <interactant intactId="EBI-307680">
        <id>Q7Y1C5</id>
    </interactant>
    <interactant intactId="EBI-307715">
        <id>Q39009</id>
        <label>DMC1</label>
    </interactant>
    <organismsDiffer>false</organismsDiffer>
    <experiments>4</experiments>
</comment>
<comment type="interaction">
    <interactant intactId="EBI-307680">
        <id>Q7Y1C5</id>
    </interactant>
    <interactant intactId="EBI-931045">
        <id>Q9XIR8</id>
        <label>DSS1(I)</label>
    </interactant>
    <organismsDiffer>false</organismsDiffer>
    <experiments>2</experiments>
</comment>
<comment type="interaction">
    <interactant intactId="EBI-307680">
        <id>Q7Y1C5</id>
    </interactant>
    <interactant intactId="EBI-307687">
        <id>P94102</id>
        <label>RAD51</label>
    </interactant>
    <organismsDiffer>false</organismsDiffer>
    <experiments>5</experiments>
</comment>
<comment type="alternative products">
    <event type="alternative splicing"/>
    <isoform>
        <id>Q7Y1C5-1</id>
        <name>1</name>
        <sequence type="displayed"/>
    </isoform>
</comment>
<comment type="tissue specificity">
    <text evidence="3">Expressed in flower buds.</text>
</comment>
<comment type="disruption phenotype">
    <text evidence="5 6">No visible phenotype under normal growth conditions, but the double mutants brca2a and brca2b are sterile due to aberrant chromosome aggregates, chromosomal fragmentation and missegregation during meiosis.</text>
</comment>
<comment type="miscellaneous">
    <molecule>Isoform 1</molecule>
    <text>A number of isoforms are produced. According to EST sequences.</text>
</comment>
<comment type="sequence caution" evidence="9">
    <conflict type="erroneous gene model prediction">
        <sequence resource="EMBL-CDS" id="AAC19315"/>
    </conflict>
    <text>Was originally thought to correspond to two different genes At4g00010 and At4g00020.</text>
</comment>
<comment type="sequence caution" evidence="9">
    <conflict type="erroneous gene model prediction">
        <sequence resource="EMBL-CDS" id="CAB80759"/>
    </conflict>
</comment>
<comment type="sequence caution" evidence="9">
    <conflict type="erroneous gene model prediction">
        <sequence resource="EMBL-CDS" id="CAB80760"/>
    </conflict>
    <text>Was originally thought to correspond to two different genes At4g00010 and At4g00020.</text>
</comment>
<keyword id="KW-0025">Alternative splicing</keyword>
<keyword id="KW-0131">Cell cycle</keyword>
<keyword id="KW-0227">DNA damage</keyword>
<keyword id="KW-0233">DNA recombination</keyword>
<keyword id="KW-0234">DNA repair</keyword>
<keyword id="KW-0238">DNA-binding</keyword>
<keyword id="KW-0469">Meiosis</keyword>
<keyword id="KW-1185">Reference proteome</keyword>
<keyword id="KW-0677">Repeat</keyword>
<reference key="1">
    <citation type="journal article" date="2004" name="EMBO J.">
        <title>Brca2 is involved in meiosis in Arabidopsis thaliana as suggested by its interaction with Dmc1.</title>
        <authorList>
            <person name="Siaud N."/>
            <person name="Dray E."/>
            <person name="Gy I."/>
            <person name="Gerard E."/>
            <person name="Takvorian N."/>
            <person name="Doutriaux M.P."/>
        </authorList>
    </citation>
    <scope>NUCLEOTIDE SEQUENCE [MRNA]</scope>
    <scope>FUNCTION</scope>
    <scope>INTERACTION WITH RAD51 AND DMC1</scope>
    <scope>TISSUE SPECIFICITY</scope>
</reference>
<reference key="2">
    <citation type="journal article" date="1999" name="Nature">
        <title>Sequence and analysis of chromosome 4 of the plant Arabidopsis thaliana.</title>
        <authorList>
            <person name="Mayer K.F.X."/>
            <person name="Schueller C."/>
            <person name="Wambutt R."/>
            <person name="Murphy G."/>
            <person name="Volckaert G."/>
            <person name="Pohl T."/>
            <person name="Duesterhoeft A."/>
            <person name="Stiekema W."/>
            <person name="Entian K.-D."/>
            <person name="Terryn N."/>
            <person name="Harris B."/>
            <person name="Ansorge W."/>
            <person name="Brandt P."/>
            <person name="Grivell L.A."/>
            <person name="Rieger M."/>
            <person name="Weichselgartner M."/>
            <person name="de Simone V."/>
            <person name="Obermaier B."/>
            <person name="Mache R."/>
            <person name="Mueller M."/>
            <person name="Kreis M."/>
            <person name="Delseny M."/>
            <person name="Puigdomenech P."/>
            <person name="Watson M."/>
            <person name="Schmidtheini T."/>
            <person name="Reichert B."/>
            <person name="Portetelle D."/>
            <person name="Perez-Alonso M."/>
            <person name="Boutry M."/>
            <person name="Bancroft I."/>
            <person name="Vos P."/>
            <person name="Hoheisel J."/>
            <person name="Zimmermann W."/>
            <person name="Wedler H."/>
            <person name="Ridley P."/>
            <person name="Langham S.-A."/>
            <person name="McCullagh B."/>
            <person name="Bilham L."/>
            <person name="Robben J."/>
            <person name="van der Schueren J."/>
            <person name="Grymonprez B."/>
            <person name="Chuang Y.-J."/>
            <person name="Vandenbussche F."/>
            <person name="Braeken M."/>
            <person name="Weltjens I."/>
            <person name="Voet M."/>
            <person name="Bastiaens I."/>
            <person name="Aert R."/>
            <person name="Defoor E."/>
            <person name="Weitzenegger T."/>
            <person name="Bothe G."/>
            <person name="Ramsperger U."/>
            <person name="Hilbert H."/>
            <person name="Braun M."/>
            <person name="Holzer E."/>
            <person name="Brandt A."/>
            <person name="Peters S."/>
            <person name="van Staveren M."/>
            <person name="Dirkse W."/>
            <person name="Mooijman P."/>
            <person name="Klein Lankhorst R."/>
            <person name="Rose M."/>
            <person name="Hauf J."/>
            <person name="Koetter P."/>
            <person name="Berneiser S."/>
            <person name="Hempel S."/>
            <person name="Feldpausch M."/>
            <person name="Lamberth S."/>
            <person name="Van den Daele H."/>
            <person name="De Keyser A."/>
            <person name="Buysshaert C."/>
            <person name="Gielen J."/>
            <person name="Villarroel R."/>
            <person name="De Clercq R."/>
            <person name="van Montagu M."/>
            <person name="Rogers J."/>
            <person name="Cronin A."/>
            <person name="Quail M.A."/>
            <person name="Bray-Allen S."/>
            <person name="Clark L."/>
            <person name="Doggett J."/>
            <person name="Hall S."/>
            <person name="Kay M."/>
            <person name="Lennard N."/>
            <person name="McLay K."/>
            <person name="Mayes R."/>
            <person name="Pettett A."/>
            <person name="Rajandream M.A."/>
            <person name="Lyne M."/>
            <person name="Benes V."/>
            <person name="Rechmann S."/>
            <person name="Borkova D."/>
            <person name="Bloecker H."/>
            <person name="Scharfe M."/>
            <person name="Grimm M."/>
            <person name="Loehnert T.-H."/>
            <person name="Dose S."/>
            <person name="de Haan M."/>
            <person name="Maarse A.C."/>
            <person name="Schaefer M."/>
            <person name="Mueller-Auer S."/>
            <person name="Gabel C."/>
            <person name="Fuchs M."/>
            <person name="Fartmann B."/>
            <person name="Granderath K."/>
            <person name="Dauner D."/>
            <person name="Herzl A."/>
            <person name="Neumann S."/>
            <person name="Argiriou A."/>
            <person name="Vitale D."/>
            <person name="Liguori R."/>
            <person name="Piravandi E."/>
            <person name="Massenet O."/>
            <person name="Quigley F."/>
            <person name="Clabauld G."/>
            <person name="Muendlein A."/>
            <person name="Felber R."/>
            <person name="Schnabl S."/>
            <person name="Hiller R."/>
            <person name="Schmidt W."/>
            <person name="Lecharny A."/>
            <person name="Aubourg S."/>
            <person name="Chefdor F."/>
            <person name="Cooke R."/>
            <person name="Berger C."/>
            <person name="Monfort A."/>
            <person name="Casacuberta E."/>
            <person name="Gibbons T."/>
            <person name="Weber N."/>
            <person name="Vandenbol M."/>
            <person name="Bargues M."/>
            <person name="Terol J."/>
            <person name="Torres A."/>
            <person name="Perez-Perez A."/>
            <person name="Purnelle B."/>
            <person name="Bent E."/>
            <person name="Johnson S."/>
            <person name="Tacon D."/>
            <person name="Jesse T."/>
            <person name="Heijnen L."/>
            <person name="Schwarz S."/>
            <person name="Scholler P."/>
            <person name="Heber S."/>
            <person name="Francs P."/>
            <person name="Bielke C."/>
            <person name="Frishman D."/>
            <person name="Haase D."/>
            <person name="Lemcke K."/>
            <person name="Mewes H.-W."/>
            <person name="Stocker S."/>
            <person name="Zaccaria P."/>
            <person name="Bevan M."/>
            <person name="Wilson R.K."/>
            <person name="de la Bastide M."/>
            <person name="Habermann K."/>
            <person name="Parnell L."/>
            <person name="Dedhia N."/>
            <person name="Gnoj L."/>
            <person name="Schutz K."/>
            <person name="Huang E."/>
            <person name="Spiegel L."/>
            <person name="Sekhon M."/>
            <person name="Murray J."/>
            <person name="Sheet P."/>
            <person name="Cordes M."/>
            <person name="Abu-Threideh J."/>
            <person name="Stoneking T."/>
            <person name="Kalicki J."/>
            <person name="Graves T."/>
            <person name="Harmon G."/>
            <person name="Edwards J."/>
            <person name="Latreille P."/>
            <person name="Courtney L."/>
            <person name="Cloud J."/>
            <person name="Abbott A."/>
            <person name="Scott K."/>
            <person name="Johnson D."/>
            <person name="Minx P."/>
            <person name="Bentley D."/>
            <person name="Fulton B."/>
            <person name="Miller N."/>
            <person name="Greco T."/>
            <person name="Kemp K."/>
            <person name="Kramer J."/>
            <person name="Fulton L."/>
            <person name="Mardis E."/>
            <person name="Dante M."/>
            <person name="Pepin K."/>
            <person name="Hillier L.W."/>
            <person name="Nelson J."/>
            <person name="Spieth J."/>
            <person name="Ryan E."/>
            <person name="Andrews S."/>
            <person name="Geisel C."/>
            <person name="Layman D."/>
            <person name="Du H."/>
            <person name="Ali J."/>
            <person name="Berghoff A."/>
            <person name="Jones K."/>
            <person name="Drone K."/>
            <person name="Cotton M."/>
            <person name="Joshu C."/>
            <person name="Antonoiu B."/>
            <person name="Zidanic M."/>
            <person name="Strong C."/>
            <person name="Sun H."/>
            <person name="Lamar B."/>
            <person name="Yordan C."/>
            <person name="Ma P."/>
            <person name="Zhong J."/>
            <person name="Preston R."/>
            <person name="Vil D."/>
            <person name="Shekher M."/>
            <person name="Matero A."/>
            <person name="Shah R."/>
            <person name="Swaby I.K."/>
            <person name="O'Shaughnessy A."/>
            <person name="Rodriguez M."/>
            <person name="Hoffman J."/>
            <person name="Till S."/>
            <person name="Granat S."/>
            <person name="Shohdy N."/>
            <person name="Hasegawa A."/>
            <person name="Hameed A."/>
            <person name="Lodhi M."/>
            <person name="Johnson A."/>
            <person name="Chen E."/>
            <person name="Marra M.A."/>
            <person name="Martienssen R."/>
            <person name="McCombie W.R."/>
        </authorList>
    </citation>
    <scope>NUCLEOTIDE SEQUENCE [LARGE SCALE GENOMIC DNA]</scope>
    <source>
        <strain>cv. Columbia</strain>
    </source>
</reference>
<reference key="3">
    <citation type="journal article" date="2017" name="Plant J.">
        <title>Araport11: a complete reannotation of the Arabidopsis thaliana reference genome.</title>
        <authorList>
            <person name="Cheng C.Y."/>
            <person name="Krishnakumar V."/>
            <person name="Chan A.P."/>
            <person name="Thibaud-Nissen F."/>
            <person name="Schobel S."/>
            <person name="Town C.D."/>
        </authorList>
    </citation>
    <scope>GENOME REANNOTATION</scope>
    <source>
        <strain>cv. Columbia</strain>
    </source>
</reference>
<reference key="4">
    <citation type="journal article" date="2006" name="Plant Physiol.">
        <title>Interaction between Arabidopsis Brca2 and its partners Rad51, Dmc1, and Dss1.</title>
        <authorList>
            <person name="Dray E."/>
            <person name="Siaud N."/>
            <person name="Dubois E."/>
            <person name="Doutriaux M.P."/>
        </authorList>
    </citation>
    <scope>INTERACTION WITH RAD51; DMC1 AND DSS1(I)</scope>
</reference>
<reference key="5">
    <citation type="journal article" date="2011" name="PLoS ONE">
        <title>Characterization of Brca2-deficient plants excludes the role of NHEJ and SSA in the meiotic chromosomal defect phenotype.</title>
        <authorList>
            <person name="Dumont M."/>
            <person name="Massot S."/>
            <person name="Doutriaux M.P."/>
            <person name="Gratias A."/>
        </authorList>
    </citation>
    <scope>FUNCTION</scope>
    <scope>DISRUPTION PHENOTYPE</scope>
</reference>
<reference key="6">
    <citation type="journal article" date="2012" name="New Phytol.">
        <title>BRCA2 is a mediator of RAD51- and DMC1-facilitated homologous recombination in Arabidopsis thaliana.</title>
        <authorList>
            <person name="Seeliger K."/>
            <person name="Dukowic-Schulze S."/>
            <person name="Wurz-Wildersinn R."/>
            <person name="Pacher M."/>
            <person name="Puchta H."/>
        </authorList>
    </citation>
    <scope>FUNCTION</scope>
    <scope>DISRUPTION PHENOTYPE</scope>
</reference>
<protein>
    <recommendedName>
        <fullName evidence="8">Protein BREAST CANCER SUSCEPTIBILITY 2 homolog A</fullName>
        <shortName evidence="8">AtBRCA2A</shortName>
    </recommendedName>
</protein>
<organism>
    <name type="scientific">Arabidopsis thaliana</name>
    <name type="common">Mouse-ear cress</name>
    <dbReference type="NCBI Taxonomy" id="3702"/>
    <lineage>
        <taxon>Eukaryota</taxon>
        <taxon>Viridiplantae</taxon>
        <taxon>Streptophyta</taxon>
        <taxon>Embryophyta</taxon>
        <taxon>Tracheophyta</taxon>
        <taxon>Spermatophyta</taxon>
        <taxon>Magnoliopsida</taxon>
        <taxon>eudicotyledons</taxon>
        <taxon>Gunneridae</taxon>
        <taxon>Pentapetalae</taxon>
        <taxon>rosids</taxon>
        <taxon>malvids</taxon>
        <taxon>Brassicales</taxon>
        <taxon>Brassicaceae</taxon>
        <taxon>Camelineae</taxon>
        <taxon>Arabidopsis</taxon>
    </lineage>
</organism>
<accession>Q7Y1C5</accession>
<accession>O81303</accession>
<accession>Q9M164</accession>
<proteinExistence type="evidence at protein level"/>